<gene>
    <name type="primary">glyQ</name>
    <name type="ordered locus">VC_0021</name>
</gene>
<sequence>MQKYDIKTFQGMILALQDYWAQQGCTIVQPLDMEVGAGTSHPMTCLRALGPEPIATAYVQPSRRPTDGRYGENPNRLQHYYQFQVIIKPSPDNIQELYLGSLRVLGVDPCVHDIRFVEDNWENPTLGAWGLGWEVWLNGMEVTQFTYFQQVGGLECKPVTGEITYGIERLAMYIQGVDSVYDLVWTDGPLGKVTYGDIFHQNEVEQSTYNFEHADVDFLFTYFDQCEKECKYLLELEKPLPLPAYERILKAAHAFNLLDARKAISVTERQRYILRIRNLTKSVAEAYYASREALGFPMCKKSEQK</sequence>
<evidence type="ECO:0000250" key="1"/>
<evidence type="ECO:0000305" key="2"/>
<name>SYGA_VIBCH</name>
<keyword id="KW-0030">Aminoacyl-tRNA synthetase</keyword>
<keyword id="KW-0067">ATP-binding</keyword>
<keyword id="KW-0963">Cytoplasm</keyword>
<keyword id="KW-0436">Ligase</keyword>
<keyword id="KW-0547">Nucleotide-binding</keyword>
<keyword id="KW-0648">Protein biosynthesis</keyword>
<keyword id="KW-1185">Reference proteome</keyword>
<organism>
    <name type="scientific">Vibrio cholerae serotype O1 (strain ATCC 39315 / El Tor Inaba N16961)</name>
    <dbReference type="NCBI Taxonomy" id="243277"/>
    <lineage>
        <taxon>Bacteria</taxon>
        <taxon>Pseudomonadati</taxon>
        <taxon>Pseudomonadota</taxon>
        <taxon>Gammaproteobacteria</taxon>
        <taxon>Vibrionales</taxon>
        <taxon>Vibrionaceae</taxon>
        <taxon>Vibrio</taxon>
    </lineage>
</organism>
<feature type="chain" id="PRO_0000072878" description="Glycine--tRNA ligase alpha subunit">
    <location>
        <begin position="1"/>
        <end position="305"/>
    </location>
</feature>
<accession>Q9KVW7</accession>
<proteinExistence type="inferred from homology"/>
<reference key="1">
    <citation type="journal article" date="2000" name="Nature">
        <title>DNA sequence of both chromosomes of the cholera pathogen Vibrio cholerae.</title>
        <authorList>
            <person name="Heidelberg J.F."/>
            <person name="Eisen J.A."/>
            <person name="Nelson W.C."/>
            <person name="Clayton R.A."/>
            <person name="Gwinn M.L."/>
            <person name="Dodson R.J."/>
            <person name="Haft D.H."/>
            <person name="Hickey E.K."/>
            <person name="Peterson J.D."/>
            <person name="Umayam L.A."/>
            <person name="Gill S.R."/>
            <person name="Nelson K.E."/>
            <person name="Read T.D."/>
            <person name="Tettelin H."/>
            <person name="Richardson D.L."/>
            <person name="Ermolaeva M.D."/>
            <person name="Vamathevan J.J."/>
            <person name="Bass S."/>
            <person name="Qin H."/>
            <person name="Dragoi I."/>
            <person name="Sellers P."/>
            <person name="McDonald L.A."/>
            <person name="Utterback T.R."/>
            <person name="Fleischmann R.D."/>
            <person name="Nierman W.C."/>
            <person name="White O."/>
            <person name="Salzberg S.L."/>
            <person name="Smith H.O."/>
            <person name="Colwell R.R."/>
            <person name="Mekalanos J.J."/>
            <person name="Venter J.C."/>
            <person name="Fraser C.M."/>
        </authorList>
    </citation>
    <scope>NUCLEOTIDE SEQUENCE [LARGE SCALE GENOMIC DNA]</scope>
    <source>
        <strain>ATCC 39315 / El Tor Inaba N16961</strain>
    </source>
</reference>
<protein>
    <recommendedName>
        <fullName>Glycine--tRNA ligase alpha subunit</fullName>
        <ecNumber>6.1.1.14</ecNumber>
    </recommendedName>
    <alternativeName>
        <fullName>Glycyl-tRNA synthetase alpha subunit</fullName>
        <shortName>GlyRS</shortName>
    </alternativeName>
</protein>
<dbReference type="EC" id="6.1.1.14"/>
<dbReference type="EMBL" id="AE003852">
    <property type="protein sequence ID" value="AAF93199.1"/>
    <property type="status" value="ALT_INIT"/>
    <property type="molecule type" value="Genomic_DNA"/>
</dbReference>
<dbReference type="PIR" id="G82373">
    <property type="entry name" value="G82373"/>
</dbReference>
<dbReference type="RefSeq" id="NP_229680.2">
    <property type="nucleotide sequence ID" value="NC_002505.1"/>
</dbReference>
<dbReference type="RefSeq" id="WP_001174901.1">
    <property type="nucleotide sequence ID" value="NZ_LT906614.1"/>
</dbReference>
<dbReference type="SMR" id="Q9KVW7"/>
<dbReference type="STRING" id="243277.VC_0021"/>
<dbReference type="DNASU" id="2614961"/>
<dbReference type="EnsemblBacteria" id="AAF93199">
    <property type="protein sequence ID" value="AAF93199"/>
    <property type="gene ID" value="VC_0021"/>
</dbReference>
<dbReference type="GeneID" id="94012466"/>
<dbReference type="KEGG" id="vch:VC_0021"/>
<dbReference type="PATRIC" id="fig|243277.26.peg.20"/>
<dbReference type="eggNOG" id="COG0752">
    <property type="taxonomic scope" value="Bacteria"/>
</dbReference>
<dbReference type="HOGENOM" id="CLU_057066_1_0_6"/>
<dbReference type="Proteomes" id="UP000000584">
    <property type="component" value="Chromosome 1"/>
</dbReference>
<dbReference type="GO" id="GO:0005737">
    <property type="term" value="C:cytoplasm"/>
    <property type="evidence" value="ECO:0007669"/>
    <property type="project" value="UniProtKB-SubCell"/>
</dbReference>
<dbReference type="GO" id="GO:0005524">
    <property type="term" value="F:ATP binding"/>
    <property type="evidence" value="ECO:0007669"/>
    <property type="project" value="UniProtKB-UniRule"/>
</dbReference>
<dbReference type="GO" id="GO:0004820">
    <property type="term" value="F:glycine-tRNA ligase activity"/>
    <property type="evidence" value="ECO:0007669"/>
    <property type="project" value="UniProtKB-UniRule"/>
</dbReference>
<dbReference type="GO" id="GO:0006426">
    <property type="term" value="P:glycyl-tRNA aminoacylation"/>
    <property type="evidence" value="ECO:0007669"/>
    <property type="project" value="UniProtKB-UniRule"/>
</dbReference>
<dbReference type="CDD" id="cd00733">
    <property type="entry name" value="GlyRS_alpha_core"/>
    <property type="match status" value="1"/>
</dbReference>
<dbReference type="FunFam" id="3.30.930.10:FF:000006">
    <property type="entry name" value="Glycine--tRNA ligase alpha subunit"/>
    <property type="match status" value="1"/>
</dbReference>
<dbReference type="Gene3D" id="3.30.930.10">
    <property type="entry name" value="Bira Bifunctional Protein, Domain 2"/>
    <property type="match status" value="1"/>
</dbReference>
<dbReference type="Gene3D" id="1.20.58.180">
    <property type="entry name" value="Class II aaRS and biotin synthetases, domain 2"/>
    <property type="match status" value="1"/>
</dbReference>
<dbReference type="HAMAP" id="MF_00254">
    <property type="entry name" value="Gly_tRNA_synth_alpha"/>
    <property type="match status" value="1"/>
</dbReference>
<dbReference type="InterPro" id="IPR045864">
    <property type="entry name" value="aa-tRNA-synth_II/BPL/LPL"/>
</dbReference>
<dbReference type="InterPro" id="IPR006194">
    <property type="entry name" value="Gly-tRNA-synth_heterodimer"/>
</dbReference>
<dbReference type="InterPro" id="IPR002310">
    <property type="entry name" value="Gly-tRNA_ligase_asu"/>
</dbReference>
<dbReference type="NCBIfam" id="TIGR00388">
    <property type="entry name" value="glyQ"/>
    <property type="match status" value="1"/>
</dbReference>
<dbReference type="NCBIfam" id="NF006827">
    <property type="entry name" value="PRK09348.1"/>
    <property type="match status" value="1"/>
</dbReference>
<dbReference type="PANTHER" id="PTHR30075:SF2">
    <property type="entry name" value="GLYCINE--TRNA LIGASE, CHLOROPLASTIC_MITOCHONDRIAL 2"/>
    <property type="match status" value="1"/>
</dbReference>
<dbReference type="PANTHER" id="PTHR30075">
    <property type="entry name" value="GLYCYL-TRNA SYNTHETASE"/>
    <property type="match status" value="1"/>
</dbReference>
<dbReference type="Pfam" id="PF02091">
    <property type="entry name" value="tRNA-synt_2e"/>
    <property type="match status" value="1"/>
</dbReference>
<dbReference type="PRINTS" id="PR01044">
    <property type="entry name" value="TRNASYNTHGA"/>
</dbReference>
<dbReference type="SUPFAM" id="SSF55681">
    <property type="entry name" value="Class II aaRS and biotin synthetases"/>
    <property type="match status" value="1"/>
</dbReference>
<dbReference type="PROSITE" id="PS50861">
    <property type="entry name" value="AA_TRNA_LIGASE_II_GLYAB"/>
    <property type="match status" value="1"/>
</dbReference>
<comment type="catalytic activity">
    <reaction>
        <text>tRNA(Gly) + glycine + ATP = glycyl-tRNA(Gly) + AMP + diphosphate</text>
        <dbReference type="Rhea" id="RHEA:16013"/>
        <dbReference type="Rhea" id="RHEA-COMP:9664"/>
        <dbReference type="Rhea" id="RHEA-COMP:9683"/>
        <dbReference type="ChEBI" id="CHEBI:30616"/>
        <dbReference type="ChEBI" id="CHEBI:33019"/>
        <dbReference type="ChEBI" id="CHEBI:57305"/>
        <dbReference type="ChEBI" id="CHEBI:78442"/>
        <dbReference type="ChEBI" id="CHEBI:78522"/>
        <dbReference type="ChEBI" id="CHEBI:456215"/>
        <dbReference type="EC" id="6.1.1.14"/>
    </reaction>
</comment>
<comment type="subunit">
    <text evidence="1">Tetramer of two alpha and two beta subunits.</text>
</comment>
<comment type="subcellular location">
    <subcellularLocation>
        <location evidence="1">Cytoplasm</location>
    </subcellularLocation>
</comment>
<comment type="similarity">
    <text evidence="2">Belongs to the class-II aminoacyl-tRNA synthetase family.</text>
</comment>
<comment type="sequence caution" evidence="2">
    <conflict type="erroneous initiation">
        <sequence resource="EMBL-CDS" id="AAF93199"/>
    </conflict>
</comment>